<accession>B2V1L8</accession>
<organism>
    <name type="scientific">Clostridium botulinum (strain Alaska E43 / Type E3)</name>
    <dbReference type="NCBI Taxonomy" id="508767"/>
    <lineage>
        <taxon>Bacteria</taxon>
        <taxon>Bacillati</taxon>
        <taxon>Bacillota</taxon>
        <taxon>Clostridia</taxon>
        <taxon>Eubacteriales</taxon>
        <taxon>Clostridiaceae</taxon>
        <taxon>Clostridium</taxon>
    </lineage>
</organism>
<evidence type="ECO:0000255" key="1">
    <source>
        <dbReference type="HAMAP-Rule" id="MF_00156"/>
    </source>
</evidence>
<gene>
    <name evidence="1" type="primary">panB</name>
    <name type="ordered locus">CLH_1680</name>
</gene>
<proteinExistence type="inferred from homology"/>
<feature type="chain" id="PRO_1000096953" description="3-methyl-2-oxobutanoate hydroxymethyltransferase">
    <location>
        <begin position="1"/>
        <end position="275"/>
    </location>
</feature>
<feature type="active site" description="Proton acceptor" evidence="1">
    <location>
        <position position="182"/>
    </location>
</feature>
<feature type="binding site" evidence="1">
    <location>
        <begin position="44"/>
        <end position="45"/>
    </location>
    <ligand>
        <name>3-methyl-2-oxobutanoate</name>
        <dbReference type="ChEBI" id="CHEBI:11851"/>
    </ligand>
</feature>
<feature type="binding site" evidence="1">
    <location>
        <position position="44"/>
    </location>
    <ligand>
        <name>Mg(2+)</name>
        <dbReference type="ChEBI" id="CHEBI:18420"/>
    </ligand>
</feature>
<feature type="binding site" evidence="1">
    <location>
        <position position="83"/>
    </location>
    <ligand>
        <name>3-methyl-2-oxobutanoate</name>
        <dbReference type="ChEBI" id="CHEBI:11851"/>
    </ligand>
</feature>
<feature type="binding site" evidence="1">
    <location>
        <position position="83"/>
    </location>
    <ligand>
        <name>Mg(2+)</name>
        <dbReference type="ChEBI" id="CHEBI:18420"/>
    </ligand>
</feature>
<feature type="binding site" evidence="1">
    <location>
        <position position="113"/>
    </location>
    <ligand>
        <name>3-methyl-2-oxobutanoate</name>
        <dbReference type="ChEBI" id="CHEBI:11851"/>
    </ligand>
</feature>
<feature type="binding site" evidence="1">
    <location>
        <position position="115"/>
    </location>
    <ligand>
        <name>Mg(2+)</name>
        <dbReference type="ChEBI" id="CHEBI:18420"/>
    </ligand>
</feature>
<protein>
    <recommendedName>
        <fullName evidence="1">3-methyl-2-oxobutanoate hydroxymethyltransferase</fullName>
        <ecNumber evidence="1">2.1.2.11</ecNumber>
    </recommendedName>
    <alternativeName>
        <fullName evidence="1">Ketopantoate hydroxymethyltransferase</fullName>
        <shortName evidence="1">KPHMT</shortName>
    </alternativeName>
</protein>
<comment type="function">
    <text evidence="1">Catalyzes the reversible reaction in which hydroxymethyl group from 5,10-methylenetetrahydrofolate is transferred onto alpha-ketoisovalerate to form ketopantoate.</text>
</comment>
<comment type="catalytic activity">
    <reaction evidence="1">
        <text>3-methyl-2-oxobutanoate + (6R)-5,10-methylene-5,6,7,8-tetrahydrofolate + H2O = 2-dehydropantoate + (6S)-5,6,7,8-tetrahydrofolate</text>
        <dbReference type="Rhea" id="RHEA:11824"/>
        <dbReference type="ChEBI" id="CHEBI:11561"/>
        <dbReference type="ChEBI" id="CHEBI:11851"/>
        <dbReference type="ChEBI" id="CHEBI:15377"/>
        <dbReference type="ChEBI" id="CHEBI:15636"/>
        <dbReference type="ChEBI" id="CHEBI:57453"/>
        <dbReference type="EC" id="2.1.2.11"/>
    </reaction>
</comment>
<comment type="cofactor">
    <cofactor evidence="1">
        <name>Mg(2+)</name>
        <dbReference type="ChEBI" id="CHEBI:18420"/>
    </cofactor>
    <text evidence="1">Binds 1 Mg(2+) ion per subunit.</text>
</comment>
<comment type="pathway">
    <text evidence="1">Cofactor biosynthesis; (R)-pantothenate biosynthesis; (R)-pantoate from 3-methyl-2-oxobutanoate: step 1/2.</text>
</comment>
<comment type="subunit">
    <text evidence="1">Homodecamer; pentamer of dimers.</text>
</comment>
<comment type="subcellular location">
    <subcellularLocation>
        <location evidence="1">Cytoplasm</location>
    </subcellularLocation>
</comment>
<comment type="similarity">
    <text evidence="1">Belongs to the PanB family.</text>
</comment>
<reference key="1">
    <citation type="submission" date="2008-05" db="EMBL/GenBank/DDBJ databases">
        <title>Complete genome sequence of Clostridium botulinum E3 str. Alaska E43.</title>
        <authorList>
            <person name="Brinkac L.M."/>
            <person name="Brown J.L."/>
            <person name="Bruce D."/>
            <person name="Detter C."/>
            <person name="Munk C."/>
            <person name="Smith L.A."/>
            <person name="Smith T.J."/>
            <person name="Sutton G."/>
            <person name="Brettin T.S."/>
        </authorList>
    </citation>
    <scope>NUCLEOTIDE SEQUENCE [LARGE SCALE GENOMIC DNA]</scope>
    <source>
        <strain>Alaska E43 / Type E3</strain>
    </source>
</reference>
<sequence>MKNTIATFQEFKNKGKKISMLTAYDYSMAKIIDESGINGILIGDSLGMVIKGEEDTLSVTVDEIIYHTKSVKKGAKNALIVSDMPFLSYHTSVEEAVKNAGKMIKEGGANAVKLEGGASVIKQIKAIVDAQIPVMGHLGLTPQSVNAFGGFKIQGKSEEAAKRLIEDAKLIEDAGAFAIVLECVPKKVAEIITKEISIPTIGIGAGNECDGQILVYQDMLGMFDDFIPKFVKQYANLGAQMREAIQIYIGEVGEGSFPQDKHSFKIDEKELQKLY</sequence>
<dbReference type="EC" id="2.1.2.11" evidence="1"/>
<dbReference type="EMBL" id="CP001078">
    <property type="protein sequence ID" value="ACD53355.1"/>
    <property type="molecule type" value="Genomic_DNA"/>
</dbReference>
<dbReference type="RefSeq" id="WP_012451280.1">
    <property type="nucleotide sequence ID" value="NC_010723.1"/>
</dbReference>
<dbReference type="SMR" id="B2V1L8"/>
<dbReference type="KEGG" id="cbt:CLH_1680"/>
<dbReference type="HOGENOM" id="CLU_036645_1_0_9"/>
<dbReference type="UniPathway" id="UPA00028">
    <property type="reaction ID" value="UER00003"/>
</dbReference>
<dbReference type="GO" id="GO:0005737">
    <property type="term" value="C:cytoplasm"/>
    <property type="evidence" value="ECO:0007669"/>
    <property type="project" value="UniProtKB-SubCell"/>
</dbReference>
<dbReference type="GO" id="GO:0003864">
    <property type="term" value="F:3-methyl-2-oxobutanoate hydroxymethyltransferase activity"/>
    <property type="evidence" value="ECO:0007669"/>
    <property type="project" value="UniProtKB-UniRule"/>
</dbReference>
<dbReference type="GO" id="GO:0000287">
    <property type="term" value="F:magnesium ion binding"/>
    <property type="evidence" value="ECO:0007669"/>
    <property type="project" value="TreeGrafter"/>
</dbReference>
<dbReference type="GO" id="GO:0015940">
    <property type="term" value="P:pantothenate biosynthetic process"/>
    <property type="evidence" value="ECO:0007669"/>
    <property type="project" value="UniProtKB-UniRule"/>
</dbReference>
<dbReference type="CDD" id="cd06557">
    <property type="entry name" value="KPHMT-like"/>
    <property type="match status" value="1"/>
</dbReference>
<dbReference type="FunFam" id="3.20.20.60:FF:000003">
    <property type="entry name" value="3-methyl-2-oxobutanoate hydroxymethyltransferase"/>
    <property type="match status" value="1"/>
</dbReference>
<dbReference type="Gene3D" id="3.20.20.60">
    <property type="entry name" value="Phosphoenolpyruvate-binding domains"/>
    <property type="match status" value="1"/>
</dbReference>
<dbReference type="HAMAP" id="MF_00156">
    <property type="entry name" value="PanB"/>
    <property type="match status" value="1"/>
</dbReference>
<dbReference type="InterPro" id="IPR003700">
    <property type="entry name" value="Pantoate_hydroxy_MeTrfase"/>
</dbReference>
<dbReference type="InterPro" id="IPR015813">
    <property type="entry name" value="Pyrv/PenolPyrv_kinase-like_dom"/>
</dbReference>
<dbReference type="InterPro" id="IPR040442">
    <property type="entry name" value="Pyrv_kinase-like_dom_sf"/>
</dbReference>
<dbReference type="NCBIfam" id="TIGR00222">
    <property type="entry name" value="panB"/>
    <property type="match status" value="1"/>
</dbReference>
<dbReference type="NCBIfam" id="NF001452">
    <property type="entry name" value="PRK00311.1"/>
    <property type="match status" value="1"/>
</dbReference>
<dbReference type="PANTHER" id="PTHR20881">
    <property type="entry name" value="3-METHYL-2-OXOBUTANOATE HYDROXYMETHYLTRANSFERASE"/>
    <property type="match status" value="1"/>
</dbReference>
<dbReference type="PANTHER" id="PTHR20881:SF0">
    <property type="entry name" value="3-METHYL-2-OXOBUTANOATE HYDROXYMETHYLTRANSFERASE"/>
    <property type="match status" value="1"/>
</dbReference>
<dbReference type="Pfam" id="PF02548">
    <property type="entry name" value="Pantoate_transf"/>
    <property type="match status" value="1"/>
</dbReference>
<dbReference type="PIRSF" id="PIRSF000388">
    <property type="entry name" value="Pantoate_hydroxy_MeTrfase"/>
    <property type="match status" value="1"/>
</dbReference>
<dbReference type="SUPFAM" id="SSF51621">
    <property type="entry name" value="Phosphoenolpyruvate/pyruvate domain"/>
    <property type="match status" value="1"/>
</dbReference>
<keyword id="KW-0963">Cytoplasm</keyword>
<keyword id="KW-0460">Magnesium</keyword>
<keyword id="KW-0479">Metal-binding</keyword>
<keyword id="KW-0566">Pantothenate biosynthesis</keyword>
<keyword id="KW-0808">Transferase</keyword>
<name>PANB_CLOBA</name>